<feature type="chain" id="PRO_0000051021" description="Protein HIRA">
    <location>
        <begin position="1"/>
        <end position="1025"/>
    </location>
</feature>
<feature type="repeat" description="WD 1">
    <location>
        <begin position="11"/>
        <end position="53"/>
    </location>
</feature>
<feature type="repeat" description="WD 2">
    <location>
        <begin position="68"/>
        <end position="107"/>
    </location>
</feature>
<feature type="repeat" description="WD 3">
    <location>
        <begin position="129"/>
        <end position="168"/>
    </location>
</feature>
<feature type="repeat" description="WD 4">
    <location>
        <begin position="172"/>
        <end position="211"/>
    </location>
</feature>
<feature type="repeat" description="WD 5">
    <location>
        <begin position="220"/>
        <end position="263"/>
    </location>
</feature>
<feature type="repeat" description="WD 6">
    <location>
        <begin position="266"/>
        <end position="322"/>
    </location>
</feature>
<feature type="repeat" description="WD 7">
    <location>
        <begin position="326"/>
        <end position="367"/>
    </location>
</feature>
<feature type="region of interest" description="Disordered" evidence="2">
    <location>
        <begin position="408"/>
        <end position="433"/>
    </location>
</feature>
<feature type="region of interest" description="Disordered" evidence="2">
    <location>
        <begin position="490"/>
        <end position="534"/>
    </location>
</feature>
<feature type="region of interest" description="Disordered" evidence="2">
    <location>
        <begin position="563"/>
        <end position="614"/>
    </location>
</feature>
<feature type="region of interest" description="Disordered" evidence="2">
    <location>
        <begin position="634"/>
        <end position="678"/>
    </location>
</feature>
<feature type="compositionally biased region" description="Polar residues" evidence="2">
    <location>
        <begin position="412"/>
        <end position="433"/>
    </location>
</feature>
<feature type="compositionally biased region" description="Polar residues" evidence="2">
    <location>
        <begin position="490"/>
        <end position="508"/>
    </location>
</feature>
<feature type="compositionally biased region" description="Basic and acidic residues" evidence="2">
    <location>
        <begin position="588"/>
        <end position="614"/>
    </location>
</feature>
<keyword id="KW-0156">Chromatin regulator</keyword>
<keyword id="KW-0539">Nucleus</keyword>
<keyword id="KW-1185">Reference proteome</keyword>
<keyword id="KW-0677">Repeat</keyword>
<keyword id="KW-0678">Repressor</keyword>
<keyword id="KW-0804">Transcription</keyword>
<keyword id="KW-0805">Transcription regulation</keyword>
<keyword id="KW-0853">WD repeat</keyword>
<reference key="1">
    <citation type="journal article" date="1998" name="Gene">
        <title>Isolation and genomic characterization of the TUPLE1/HIRA gene of the pufferfish Fugu rubripes.</title>
        <authorList>
            <person name="Llevadot R."/>
            <person name="Estivill X."/>
            <person name="Scambler P."/>
            <person name="Pritchard M."/>
        </authorList>
    </citation>
    <scope>NUCLEOTIDE SEQUENCE [GENOMIC DNA / MRNA]</scope>
</reference>
<sequence>MKLLKPSWVSHNGKPIFSVDIHPDGTKFATGGQGEDSGKVMIWNMAPVLKEEDEKNENVPKMLCQMDNHLACVNCVRWSNNGLYLASGGDDKLVMVWKRAALIGPSTVFGSSNKLANVEQWRCVTILRNHTGDVMDVSWSPHDVWLASCSVDNTIVIWNARKFPEMVTCLRGHTGLVKGLTWDPVGKYIASQADDHSLRVWRTVDWQMEANITKPFSECGGTTHVLRLSWSPDGQYLVSAHAMNNSGPTAQIVERDGWRTNMDFVGHRKAVTVVKFNPKIFKKKQKNGGSPKPSCPYCCCAVGSKDRSLSVWLTSLKRPLVVIHDLFDKSIMDISWTLTGLGMLVCSMDGTVAYLDFSLDELGDPLSEEEKNSIHQNIYGKSLAITNTEPQLSTTIIENPEMLKYQQERRNSTQANSGPGATGSESATPKLNSVMNGESLEDIRKNLLKKQVETRTPDGRRRITPLCIAQLDTGDFSPALFNSAPILPSGSSMSNQLTSQLSSDSSPGQAPPLGLRPSQDPMLISPPPSSAAKVLEDNKDGVKSCLLLTSASKIEPMKALDSRFTERSKATPGATAAIASSTGLTPSERPKESTPMQKDVKSKEDTSSDSEDKMATINKNLAFNKRKPELLMDGAEVVEKRKKGRPRKDKMAASIAQPLTQTTSPAEREPSRAAAAGAGAAAPTAAAALKLPTPSIKKAFTLQVSMDPSVVLEVENEVSVVAGSRLSQLRCSRDGRDWNTLLPSSVLTAAGSSDVVAVASQDRMLSVFSSCGRRLLPAIQLATPASALHCSAHFVMVLTSGATLSVWDVHKQKALVKNESLLTILSGAAVTVSQSMLTQQGVPVVGLSNGKSYCFSLSLETWTLIADTADSLVQCADFRNCLPNQDAPMSSGPLAAMQGRNFNAGRLASRLSSTPHHLQQSMTLAFLENQLASALTLQSAQEYRYWLLIYARFLVNEGSEYRLRELCKELLGPVHKSATTSWEPTTLGLRKRDLLREVLPVVGENLRFQRLFTEYQDQLELLRNK</sequence>
<proteinExistence type="evidence at transcript level"/>
<name>HIRA_TAKRU</name>
<accession>O42611</accession>
<gene>
    <name type="primary">hira</name>
    <name type="synonym">tuple1</name>
</gene>
<dbReference type="EMBL" id="U94325">
    <property type="protein sequence ID" value="AAC60370.1"/>
    <property type="molecule type" value="Genomic_DNA"/>
</dbReference>
<dbReference type="EMBL" id="U94324">
    <property type="protein sequence ID" value="AAC60369.1"/>
    <property type="molecule type" value="mRNA"/>
</dbReference>
<dbReference type="RefSeq" id="NP_001027852.1">
    <property type="nucleotide sequence ID" value="NM_001032680.1"/>
</dbReference>
<dbReference type="SMR" id="O42611"/>
<dbReference type="FunCoup" id="O42611">
    <property type="interactions" value="1414"/>
</dbReference>
<dbReference type="STRING" id="31033.ENSTRUP00000056739"/>
<dbReference type="GeneID" id="446054"/>
<dbReference type="KEGG" id="tru:446054"/>
<dbReference type="CTD" id="7290"/>
<dbReference type="eggNOG" id="KOG0973">
    <property type="taxonomic scope" value="Eukaryota"/>
</dbReference>
<dbReference type="InParanoid" id="O42611"/>
<dbReference type="OrthoDB" id="1741719at2759"/>
<dbReference type="Proteomes" id="UP000005226">
    <property type="component" value="Unplaced"/>
</dbReference>
<dbReference type="GO" id="GO:0000785">
    <property type="term" value="C:chromatin"/>
    <property type="evidence" value="ECO:0007669"/>
    <property type="project" value="TreeGrafter"/>
</dbReference>
<dbReference type="GO" id="GO:0000417">
    <property type="term" value="C:HIR complex"/>
    <property type="evidence" value="ECO:0007669"/>
    <property type="project" value="TreeGrafter"/>
</dbReference>
<dbReference type="GO" id="GO:0005634">
    <property type="term" value="C:nucleus"/>
    <property type="evidence" value="ECO:0007669"/>
    <property type="project" value="UniProtKB-SubCell"/>
</dbReference>
<dbReference type="GO" id="GO:0031491">
    <property type="term" value="F:nucleosome binding"/>
    <property type="evidence" value="ECO:0007669"/>
    <property type="project" value="TreeGrafter"/>
</dbReference>
<dbReference type="GO" id="GO:0006338">
    <property type="term" value="P:chromatin remodeling"/>
    <property type="evidence" value="ECO:0007669"/>
    <property type="project" value="InterPro"/>
</dbReference>
<dbReference type="GO" id="GO:0006351">
    <property type="term" value="P:DNA-templated transcription"/>
    <property type="evidence" value="ECO:0007669"/>
    <property type="project" value="InterPro"/>
</dbReference>
<dbReference type="GO" id="GO:0006355">
    <property type="term" value="P:regulation of DNA-templated transcription"/>
    <property type="evidence" value="ECO:0007669"/>
    <property type="project" value="InterPro"/>
</dbReference>
<dbReference type="CDD" id="cd00200">
    <property type="entry name" value="WD40"/>
    <property type="match status" value="1"/>
</dbReference>
<dbReference type="FunFam" id="2.130.10.10:FF:000075">
    <property type="entry name" value="Protein HIRA"/>
    <property type="match status" value="1"/>
</dbReference>
<dbReference type="FunFam" id="2.130.10.10:FF:000105">
    <property type="entry name" value="Protein HIRA"/>
    <property type="match status" value="1"/>
</dbReference>
<dbReference type="Gene3D" id="2.130.10.10">
    <property type="entry name" value="YVTN repeat-like/Quinoprotein amine dehydrogenase"/>
    <property type="match status" value="2"/>
</dbReference>
<dbReference type="InterPro" id="IPR055410">
    <property type="entry name" value="CAF1B_HIR1_beta-prop"/>
</dbReference>
<dbReference type="InterPro" id="IPR031120">
    <property type="entry name" value="HIR1-like"/>
</dbReference>
<dbReference type="InterPro" id="IPR011494">
    <property type="entry name" value="HIRA-like_C"/>
</dbReference>
<dbReference type="InterPro" id="IPR019015">
    <property type="entry name" value="HIRA_B_motif"/>
</dbReference>
<dbReference type="InterPro" id="IPR015943">
    <property type="entry name" value="WD40/YVTN_repeat-like_dom_sf"/>
</dbReference>
<dbReference type="InterPro" id="IPR036322">
    <property type="entry name" value="WD40_repeat_dom_sf"/>
</dbReference>
<dbReference type="InterPro" id="IPR001680">
    <property type="entry name" value="WD40_rpt"/>
</dbReference>
<dbReference type="PANTHER" id="PTHR13831">
    <property type="entry name" value="MEMBER OF THE HIR1 FAMILY OF WD-REPEAT PROTEINS"/>
    <property type="match status" value="1"/>
</dbReference>
<dbReference type="PANTHER" id="PTHR13831:SF0">
    <property type="entry name" value="PROTEIN HIRA"/>
    <property type="match status" value="1"/>
</dbReference>
<dbReference type="Pfam" id="PF24105">
    <property type="entry name" value="Beta-prop_CAF1B_HIR1"/>
    <property type="match status" value="1"/>
</dbReference>
<dbReference type="Pfam" id="PF07569">
    <property type="entry name" value="Hira"/>
    <property type="match status" value="1"/>
</dbReference>
<dbReference type="Pfam" id="PF09453">
    <property type="entry name" value="HIRA_B"/>
    <property type="match status" value="1"/>
</dbReference>
<dbReference type="SMART" id="SM00320">
    <property type="entry name" value="WD40"/>
    <property type="match status" value="8"/>
</dbReference>
<dbReference type="SUPFAM" id="SSF50978">
    <property type="entry name" value="WD40 repeat-like"/>
    <property type="match status" value="2"/>
</dbReference>
<dbReference type="PROSITE" id="PS00678">
    <property type="entry name" value="WD_REPEATS_1"/>
    <property type="match status" value="1"/>
</dbReference>
<dbReference type="PROSITE" id="PS50082">
    <property type="entry name" value="WD_REPEATS_2"/>
    <property type="match status" value="3"/>
</dbReference>
<dbReference type="PROSITE" id="PS50294">
    <property type="entry name" value="WD_REPEATS_REGION"/>
    <property type="match status" value="1"/>
</dbReference>
<evidence type="ECO:0000250" key="1"/>
<evidence type="ECO:0000256" key="2">
    <source>
        <dbReference type="SAM" id="MobiDB-lite"/>
    </source>
</evidence>
<evidence type="ECO:0000305" key="3"/>
<comment type="function">
    <text evidence="1">Required for replication-independent chromatin assembly and for the periodic repression of histone gene transcription during the cell cycle.</text>
</comment>
<comment type="subcellular location">
    <subcellularLocation>
        <location evidence="1">Nucleus</location>
    </subcellularLocation>
</comment>
<comment type="similarity">
    <text evidence="3">Belongs to the WD repeat HIR1 family.</text>
</comment>
<organism>
    <name type="scientific">Takifugu rubripes</name>
    <name type="common">Japanese pufferfish</name>
    <name type="synonym">Fugu rubripes</name>
    <dbReference type="NCBI Taxonomy" id="31033"/>
    <lineage>
        <taxon>Eukaryota</taxon>
        <taxon>Metazoa</taxon>
        <taxon>Chordata</taxon>
        <taxon>Craniata</taxon>
        <taxon>Vertebrata</taxon>
        <taxon>Euteleostomi</taxon>
        <taxon>Actinopterygii</taxon>
        <taxon>Neopterygii</taxon>
        <taxon>Teleostei</taxon>
        <taxon>Neoteleostei</taxon>
        <taxon>Acanthomorphata</taxon>
        <taxon>Eupercaria</taxon>
        <taxon>Tetraodontiformes</taxon>
        <taxon>Tetradontoidea</taxon>
        <taxon>Tetraodontidae</taxon>
        <taxon>Takifugu</taxon>
    </lineage>
</organism>
<protein>
    <recommendedName>
        <fullName>Protein HIRA</fullName>
    </recommendedName>
    <alternativeName>
        <fullName>TUP1-like enhancer of split protein 1</fullName>
    </alternativeName>
</protein>